<comment type="function">
    <text evidence="1">Bifunctional serine/threonine kinase and phosphorylase involved in the regulation of the phosphoenolpyruvate synthase (PEPS) by catalyzing its phosphorylation/dephosphorylation.</text>
</comment>
<comment type="catalytic activity">
    <reaction evidence="1">
        <text>[pyruvate, water dikinase] + ADP = [pyruvate, water dikinase]-phosphate + AMP + H(+)</text>
        <dbReference type="Rhea" id="RHEA:46020"/>
        <dbReference type="Rhea" id="RHEA-COMP:11425"/>
        <dbReference type="Rhea" id="RHEA-COMP:11426"/>
        <dbReference type="ChEBI" id="CHEBI:15378"/>
        <dbReference type="ChEBI" id="CHEBI:43176"/>
        <dbReference type="ChEBI" id="CHEBI:68546"/>
        <dbReference type="ChEBI" id="CHEBI:456215"/>
        <dbReference type="ChEBI" id="CHEBI:456216"/>
        <dbReference type="EC" id="2.7.11.33"/>
    </reaction>
</comment>
<comment type="catalytic activity">
    <reaction evidence="1">
        <text>[pyruvate, water dikinase]-phosphate + phosphate + H(+) = [pyruvate, water dikinase] + diphosphate</text>
        <dbReference type="Rhea" id="RHEA:48580"/>
        <dbReference type="Rhea" id="RHEA-COMP:11425"/>
        <dbReference type="Rhea" id="RHEA-COMP:11426"/>
        <dbReference type="ChEBI" id="CHEBI:15378"/>
        <dbReference type="ChEBI" id="CHEBI:33019"/>
        <dbReference type="ChEBI" id="CHEBI:43176"/>
        <dbReference type="ChEBI" id="CHEBI:43474"/>
        <dbReference type="ChEBI" id="CHEBI:68546"/>
        <dbReference type="EC" id="2.7.4.28"/>
    </reaction>
</comment>
<comment type="similarity">
    <text evidence="1">Belongs to the pyruvate, phosphate/water dikinase regulatory protein family. PSRP subfamily.</text>
</comment>
<gene>
    <name type="ordered locus">Sama_2073</name>
</gene>
<proteinExistence type="inferred from homology"/>
<sequence length="270" mass="30775">MARKVFYISDGTAITAEVFGHAVLSQFPMEFEAITIPFVETNAKAEAVKKQINDSFITTGERPLVFHSIVKPEIRDVIYSSEGLDYDFLNTFVAPLEQQLGVSAAPVLHRTHGKANHSYEARIDAINFAMENDDGQTLKHMDKADIILLGVSRCGKTPSSLYLSMQFGIKAANYPFTEDDMDSLKLPEALKRNKHKLFGLTIDPVRLQEIRQSRMENSRYSSLRQCRMEVKEVEMMFKKERIPYIDTTNHSVEEIATKILDMTGMERHMF</sequence>
<keyword id="KW-0418">Kinase</keyword>
<keyword id="KW-0547">Nucleotide-binding</keyword>
<keyword id="KW-1185">Reference proteome</keyword>
<keyword id="KW-0723">Serine/threonine-protein kinase</keyword>
<keyword id="KW-0808">Transferase</keyword>
<organism>
    <name type="scientific">Shewanella amazonensis (strain ATCC BAA-1098 / SB2B)</name>
    <dbReference type="NCBI Taxonomy" id="326297"/>
    <lineage>
        <taxon>Bacteria</taxon>
        <taxon>Pseudomonadati</taxon>
        <taxon>Pseudomonadota</taxon>
        <taxon>Gammaproteobacteria</taxon>
        <taxon>Alteromonadales</taxon>
        <taxon>Shewanellaceae</taxon>
        <taxon>Shewanella</taxon>
    </lineage>
</organism>
<feature type="chain" id="PRO_0000316731" description="Putative phosphoenolpyruvate synthase regulatory protein">
    <location>
        <begin position="1"/>
        <end position="270"/>
    </location>
</feature>
<feature type="binding site" evidence="1">
    <location>
        <begin position="150"/>
        <end position="157"/>
    </location>
    <ligand>
        <name>ADP</name>
        <dbReference type="ChEBI" id="CHEBI:456216"/>
    </ligand>
</feature>
<reference key="1">
    <citation type="submission" date="2006-12" db="EMBL/GenBank/DDBJ databases">
        <title>Complete sequence of Shewanella amazonensis SB2B.</title>
        <authorList>
            <consortium name="US DOE Joint Genome Institute"/>
            <person name="Copeland A."/>
            <person name="Lucas S."/>
            <person name="Lapidus A."/>
            <person name="Barry K."/>
            <person name="Detter J.C."/>
            <person name="Glavina del Rio T."/>
            <person name="Hammon N."/>
            <person name="Israni S."/>
            <person name="Dalin E."/>
            <person name="Tice H."/>
            <person name="Pitluck S."/>
            <person name="Munk A.C."/>
            <person name="Brettin T."/>
            <person name="Bruce D."/>
            <person name="Han C."/>
            <person name="Tapia R."/>
            <person name="Gilna P."/>
            <person name="Schmutz J."/>
            <person name="Larimer F."/>
            <person name="Land M."/>
            <person name="Hauser L."/>
            <person name="Kyrpides N."/>
            <person name="Mikhailova N."/>
            <person name="Fredrickson J."/>
            <person name="Richardson P."/>
        </authorList>
    </citation>
    <scope>NUCLEOTIDE SEQUENCE [LARGE SCALE GENOMIC DNA]</scope>
    <source>
        <strain>ATCC BAA-1098 / SB2B</strain>
    </source>
</reference>
<accession>A1S7C2</accession>
<dbReference type="EC" id="2.7.11.33" evidence="1"/>
<dbReference type="EC" id="2.7.4.28" evidence="1"/>
<dbReference type="EMBL" id="CP000507">
    <property type="protein sequence ID" value="ABM00279.1"/>
    <property type="molecule type" value="Genomic_DNA"/>
</dbReference>
<dbReference type="RefSeq" id="WP_011760186.1">
    <property type="nucleotide sequence ID" value="NC_008700.1"/>
</dbReference>
<dbReference type="SMR" id="A1S7C2"/>
<dbReference type="STRING" id="326297.Sama_2073"/>
<dbReference type="KEGG" id="saz:Sama_2073"/>
<dbReference type="eggNOG" id="COG1806">
    <property type="taxonomic scope" value="Bacteria"/>
</dbReference>
<dbReference type="HOGENOM" id="CLU_046206_1_0_6"/>
<dbReference type="OrthoDB" id="9782201at2"/>
<dbReference type="Proteomes" id="UP000009175">
    <property type="component" value="Chromosome"/>
</dbReference>
<dbReference type="GO" id="GO:0043531">
    <property type="term" value="F:ADP binding"/>
    <property type="evidence" value="ECO:0007669"/>
    <property type="project" value="UniProtKB-UniRule"/>
</dbReference>
<dbReference type="GO" id="GO:0005524">
    <property type="term" value="F:ATP binding"/>
    <property type="evidence" value="ECO:0007669"/>
    <property type="project" value="InterPro"/>
</dbReference>
<dbReference type="GO" id="GO:0016776">
    <property type="term" value="F:phosphotransferase activity, phosphate group as acceptor"/>
    <property type="evidence" value="ECO:0007669"/>
    <property type="project" value="UniProtKB-UniRule"/>
</dbReference>
<dbReference type="GO" id="GO:0004674">
    <property type="term" value="F:protein serine/threonine kinase activity"/>
    <property type="evidence" value="ECO:0007669"/>
    <property type="project" value="UniProtKB-UniRule"/>
</dbReference>
<dbReference type="HAMAP" id="MF_01062">
    <property type="entry name" value="PSRP"/>
    <property type="match status" value="1"/>
</dbReference>
<dbReference type="InterPro" id="IPR005177">
    <property type="entry name" value="Kinase-pyrophosphorylase"/>
</dbReference>
<dbReference type="InterPro" id="IPR026530">
    <property type="entry name" value="PSRP"/>
</dbReference>
<dbReference type="NCBIfam" id="NF003742">
    <property type="entry name" value="PRK05339.1"/>
    <property type="match status" value="1"/>
</dbReference>
<dbReference type="PANTHER" id="PTHR31756">
    <property type="entry name" value="PYRUVATE, PHOSPHATE DIKINASE REGULATORY PROTEIN 1, CHLOROPLASTIC"/>
    <property type="match status" value="1"/>
</dbReference>
<dbReference type="PANTHER" id="PTHR31756:SF3">
    <property type="entry name" value="PYRUVATE, PHOSPHATE DIKINASE REGULATORY PROTEIN 1, CHLOROPLASTIC"/>
    <property type="match status" value="1"/>
</dbReference>
<dbReference type="Pfam" id="PF03618">
    <property type="entry name" value="Kinase-PPPase"/>
    <property type="match status" value="1"/>
</dbReference>
<name>PSRP_SHEAM</name>
<protein>
    <recommendedName>
        <fullName evidence="1">Putative phosphoenolpyruvate synthase regulatory protein</fullName>
        <shortName evidence="1">PEP synthase regulatory protein</shortName>
        <shortName evidence="1">PSRP</shortName>
        <ecNumber evidence="1">2.7.11.33</ecNumber>
        <ecNumber evidence="1">2.7.4.28</ecNumber>
    </recommendedName>
    <alternativeName>
        <fullName evidence="1">Pyruvate, water dikinase regulatory protein</fullName>
    </alternativeName>
</protein>
<evidence type="ECO:0000255" key="1">
    <source>
        <dbReference type="HAMAP-Rule" id="MF_01062"/>
    </source>
</evidence>